<reference key="1">
    <citation type="journal article" date="1995" name="Biochem. J.">
        <title>Primary structure and tissue-specific expression of blue crab (Callinectes sapidus) metallothionein isoforms.</title>
        <authorList>
            <person name="Brouwer M."/>
            <person name="Enghild J."/>
            <person name="Hoexum-Brouwer T."/>
            <person name="Thogersen I."/>
            <person name="Truncali A."/>
        </authorList>
    </citation>
    <scope>PROTEIN SEQUENCE</scope>
</reference>
<reference evidence="3 4 5 6" key="2">
    <citation type="journal article" date="1995" name="Biochemistry">
        <title>Three-dimensional solution structure of Callinectes sapidus metallothionein-1 determined by homonuclear and heteronuclear magnetic resonance spectroscopy.</title>
        <authorList>
            <person name="Narula S.S."/>
            <person name="Brouwer M."/>
            <person name="Hua Y."/>
            <person name="Armitage I.M."/>
        </authorList>
    </citation>
    <scope>STRUCTURE BY NMR IN COMPLEX WITH CADMIUM IONS</scope>
</reference>
<feature type="chain" id="PRO_0000041754" description="Metallothionein-1B">
    <location>
        <begin position="1"/>
        <end position="59"/>
    </location>
</feature>
<feature type="chain" id="PRO_0000041755" description="Metallothionein-1A">
    <location>
        <begin position="2"/>
        <end position="59"/>
    </location>
</feature>
<feature type="region of interest" description="Beta">
    <location>
        <begin position="1"/>
        <end position="29"/>
    </location>
</feature>
<feature type="region of interest" description="Alpha">
    <location>
        <begin position="30"/>
        <end position="59"/>
    </location>
</feature>
<feature type="binding site" evidence="1 6">
    <location>
        <position position="5"/>
    </location>
    <ligand>
        <name>a divalent metal cation</name>
        <dbReference type="ChEBI" id="CHEBI:60240"/>
        <label>1</label>
        <note>in cluster B</note>
    </ligand>
</feature>
<feature type="binding site" evidence="1 6">
    <location>
        <position position="6"/>
    </location>
    <ligand>
        <name>a divalent metal cation</name>
        <dbReference type="ChEBI" id="CHEBI:60240"/>
        <label>1</label>
        <note>in cluster B</note>
    </ligand>
</feature>
<feature type="binding site" evidence="1 6">
    <location>
        <position position="6"/>
    </location>
    <ligand>
        <name>a divalent metal cation</name>
        <dbReference type="ChEBI" id="CHEBI:60240"/>
        <label>2</label>
        <note>in cluster B</note>
    </ligand>
</feature>
<feature type="binding site" evidence="1 6">
    <location>
        <position position="10"/>
    </location>
    <ligand>
        <name>a divalent metal cation</name>
        <dbReference type="ChEBI" id="CHEBI:60240"/>
        <label>2</label>
        <note>in cluster B</note>
    </ligand>
</feature>
<feature type="binding site" evidence="1 6">
    <location>
        <position position="10"/>
    </location>
    <ligand>
        <name>a divalent metal cation</name>
        <dbReference type="ChEBI" id="CHEBI:60240"/>
        <label>3</label>
        <note>in cluster B</note>
    </ligand>
</feature>
<feature type="binding site" evidence="1 6">
    <location>
        <position position="17"/>
    </location>
    <ligand>
        <name>a divalent metal cation</name>
        <dbReference type="ChEBI" id="CHEBI:60240"/>
        <label>1</label>
        <note>in cluster B</note>
    </ligand>
</feature>
<feature type="binding site" evidence="1 6">
    <location>
        <position position="17"/>
    </location>
    <ligand>
        <name>a divalent metal cation</name>
        <dbReference type="ChEBI" id="CHEBI:60240"/>
        <label>3</label>
        <note>in cluster B</note>
    </ligand>
</feature>
<feature type="binding site" evidence="1 6">
    <location>
        <position position="21"/>
    </location>
    <ligand>
        <name>a divalent metal cation</name>
        <dbReference type="ChEBI" id="CHEBI:60240"/>
        <label>1</label>
        <note>in cluster B</note>
    </ligand>
</feature>
<feature type="binding site" evidence="1 6">
    <location>
        <position position="23"/>
    </location>
    <ligand>
        <name>a divalent metal cation</name>
        <dbReference type="ChEBI" id="CHEBI:60240"/>
        <label>2</label>
        <note>in cluster B</note>
    </ligand>
</feature>
<feature type="binding site" evidence="1 6">
    <location>
        <position position="26"/>
    </location>
    <ligand>
        <name>a divalent metal cation</name>
        <dbReference type="ChEBI" id="CHEBI:60240"/>
        <label>2</label>
        <note>in cluster B</note>
    </ligand>
</feature>
<feature type="binding site" evidence="1 6">
    <location>
        <position position="26"/>
    </location>
    <ligand>
        <name>a divalent metal cation</name>
        <dbReference type="ChEBI" id="CHEBI:60240"/>
        <label>3</label>
        <note>in cluster B</note>
    </ligand>
</feature>
<feature type="binding site" evidence="1 6">
    <location>
        <position position="28"/>
    </location>
    <ligand>
        <name>a divalent metal cation</name>
        <dbReference type="ChEBI" id="CHEBI:60240"/>
        <label>3</label>
        <note>in cluster B</note>
    </ligand>
</feature>
<feature type="binding site" evidence="1 3">
    <location>
        <position position="31"/>
    </location>
    <ligand>
        <name>a divalent metal cation</name>
        <dbReference type="ChEBI" id="CHEBI:60240"/>
        <label>4</label>
        <note>in cluster A</note>
    </ligand>
</feature>
<feature type="binding site" evidence="1 3">
    <location>
        <position position="34"/>
    </location>
    <ligand>
        <name>a divalent metal cation</name>
        <dbReference type="ChEBI" id="CHEBI:60240"/>
        <label>4</label>
        <note>in cluster A</note>
    </ligand>
</feature>
<feature type="binding site" evidence="1 3">
    <location>
        <position position="34"/>
    </location>
    <ligand>
        <name>a divalent metal cation</name>
        <dbReference type="ChEBI" id="CHEBI:60240"/>
        <label>5</label>
        <note>in cluster A</note>
    </ligand>
</feature>
<feature type="binding site" evidence="1 3">
    <location>
        <position position="38"/>
    </location>
    <ligand>
        <name>a divalent metal cation</name>
        <dbReference type="ChEBI" id="CHEBI:60240"/>
        <label>5</label>
        <note>in cluster A</note>
    </ligand>
</feature>
<feature type="binding site" evidence="1 3">
    <location>
        <position position="40"/>
    </location>
    <ligand>
        <name>a divalent metal cation</name>
        <dbReference type="ChEBI" id="CHEBI:60240"/>
        <label>6</label>
        <note>in cluster A</note>
    </ligand>
</feature>
<feature type="binding site" evidence="1 3">
    <location>
        <position position="46"/>
    </location>
    <ligand>
        <name>a divalent metal cation</name>
        <dbReference type="ChEBI" id="CHEBI:60240"/>
        <label>6</label>
        <note>in cluster A</note>
    </ligand>
</feature>
<feature type="binding site" evidence="1 3">
    <location>
        <position position="50"/>
    </location>
    <ligand>
        <name>a divalent metal cation</name>
        <dbReference type="ChEBI" id="CHEBI:60240"/>
        <label>4</label>
        <note>in cluster A</note>
    </ligand>
</feature>
<feature type="binding site" evidence="1 3">
    <location>
        <position position="50"/>
    </location>
    <ligand>
        <name>a divalent metal cation</name>
        <dbReference type="ChEBI" id="CHEBI:60240"/>
        <label>6</label>
        <note>in cluster A</note>
    </ligand>
</feature>
<feature type="binding site" evidence="1 3">
    <location>
        <position position="54"/>
    </location>
    <ligand>
        <name>a divalent metal cation</name>
        <dbReference type="ChEBI" id="CHEBI:60240"/>
        <label>4</label>
        <note>in cluster A</note>
    </ligand>
</feature>
<feature type="binding site" evidence="1 3">
    <location>
        <position position="56"/>
    </location>
    <ligand>
        <name>a divalent metal cation</name>
        <dbReference type="ChEBI" id="CHEBI:60240"/>
        <label>5</label>
        <note>in cluster A</note>
    </ligand>
</feature>
<feature type="binding site" evidence="1 3">
    <location>
        <position position="57"/>
    </location>
    <ligand>
        <name>a divalent metal cation</name>
        <dbReference type="ChEBI" id="CHEBI:60240"/>
        <label>5</label>
        <note>in cluster A</note>
    </ligand>
</feature>
<feature type="binding site" evidence="1 3">
    <location>
        <position position="57"/>
    </location>
    <ligand>
        <name>a divalent metal cation</name>
        <dbReference type="ChEBI" id="CHEBI:60240"/>
        <label>6</label>
        <note>in cluster A</note>
    </ligand>
</feature>
<feature type="turn" evidence="8">
    <location>
        <begin position="12"/>
        <end position="15"/>
    </location>
</feature>
<feature type="strand" evidence="9">
    <location>
        <begin position="24"/>
        <end position="26"/>
    </location>
</feature>
<feature type="turn" evidence="7">
    <location>
        <begin position="32"/>
        <end position="37"/>
    </location>
</feature>
<feature type="helix" evidence="7">
    <location>
        <begin position="43"/>
        <end position="49"/>
    </location>
</feature>
<feature type="strand" evidence="7">
    <location>
        <begin position="55"/>
        <end position="57"/>
    </location>
</feature>
<dbReference type="PIR" id="S59072">
    <property type="entry name" value="S59072"/>
</dbReference>
<dbReference type="PDB" id="1DMC">
    <property type="method" value="NMR"/>
    <property type="chains" value="A=29-59"/>
</dbReference>
<dbReference type="PDB" id="1DMD">
    <property type="method" value="NMR"/>
    <property type="chains" value="A=29-59"/>
</dbReference>
<dbReference type="PDB" id="1DME">
    <property type="method" value="NMR"/>
    <property type="chains" value="A=2-29"/>
</dbReference>
<dbReference type="PDB" id="1DMF">
    <property type="method" value="NMR"/>
    <property type="chains" value="A=2-29"/>
</dbReference>
<dbReference type="PDBsum" id="1DMC"/>
<dbReference type="PDBsum" id="1DMD"/>
<dbReference type="PDBsum" id="1DME"/>
<dbReference type="PDBsum" id="1DMF"/>
<dbReference type="SMR" id="P55949"/>
<dbReference type="EvolutionaryTrace" id="P55949"/>
<dbReference type="GO" id="GO:0046872">
    <property type="term" value="F:metal ion binding"/>
    <property type="evidence" value="ECO:0007669"/>
    <property type="project" value="UniProtKB-KW"/>
</dbReference>
<dbReference type="InterPro" id="IPR002045">
    <property type="entry name" value="Metalthion_crustacean"/>
</dbReference>
<dbReference type="InterPro" id="IPR017854">
    <property type="entry name" value="Metalthion_dom_sf"/>
</dbReference>
<dbReference type="PRINTS" id="PR00858">
    <property type="entry name" value="MTCRUSTACEAN"/>
</dbReference>
<dbReference type="SUPFAM" id="SSF57868">
    <property type="entry name" value="Metallothionein"/>
    <property type="match status" value="2"/>
</dbReference>
<protein>
    <recommendedName>
        <fullName>Metallothionein-1B</fullName>
        <shortName>MT-1B</shortName>
    </recommendedName>
    <alternativeName>
        <fullName>Metallothionein-IB</fullName>
        <shortName>MT-IB</shortName>
    </alternativeName>
    <component>
        <recommendedName>
            <fullName>Metallothionein-1A</fullName>
            <shortName>MT-1A</shortName>
        </recommendedName>
        <alternativeName>
            <fullName>Metallothionein-IA</fullName>
            <shortName>MT-IA</shortName>
        </alternativeName>
    </component>
</protein>
<organism>
    <name type="scientific">Callinectes sapidus</name>
    <name type="common">Blue crab</name>
    <dbReference type="NCBI Taxonomy" id="6763"/>
    <lineage>
        <taxon>Eukaryota</taxon>
        <taxon>Metazoa</taxon>
        <taxon>Ecdysozoa</taxon>
        <taxon>Arthropoda</taxon>
        <taxon>Crustacea</taxon>
        <taxon>Multicrustacea</taxon>
        <taxon>Malacostraca</taxon>
        <taxon>Eumalacostraca</taxon>
        <taxon>Eucarida</taxon>
        <taxon>Decapoda</taxon>
        <taxon>Pleocyemata</taxon>
        <taxon>Brachyura</taxon>
        <taxon>Eubrachyura</taxon>
        <taxon>Portunoidea</taxon>
        <taxon>Portunidae</taxon>
        <taxon>Portuninae</taxon>
        <taxon>Callinectes</taxon>
    </lineage>
</organism>
<name>MT1_CALSI</name>
<accession>P55949</accession>
<keyword id="KW-0002">3D-structure</keyword>
<keyword id="KW-0104">Cadmium</keyword>
<keyword id="KW-0186">Copper</keyword>
<keyword id="KW-0903">Direct protein sequencing</keyword>
<keyword id="KW-0479">Metal-binding</keyword>
<keyword id="KW-0480">Metal-thiolate cluster</keyword>
<comment type="function">
    <text>Binds six divalent metal ions. Known to bind copper and cadmium.</text>
</comment>
<comment type="similarity">
    <text evidence="2">Belongs to the metallothionein superfamily. Type 3 family.</text>
</comment>
<evidence type="ECO:0000269" key="1">
    <source>
    </source>
</evidence>
<evidence type="ECO:0000305" key="2"/>
<evidence type="ECO:0007744" key="3">
    <source>
        <dbReference type="PDB" id="1DMC"/>
    </source>
</evidence>
<evidence type="ECO:0007744" key="4">
    <source>
        <dbReference type="PDB" id="1DMD"/>
    </source>
</evidence>
<evidence type="ECO:0007744" key="5">
    <source>
        <dbReference type="PDB" id="1DME"/>
    </source>
</evidence>
<evidence type="ECO:0007744" key="6">
    <source>
        <dbReference type="PDB" id="1DMF"/>
    </source>
</evidence>
<evidence type="ECO:0007829" key="7">
    <source>
        <dbReference type="PDB" id="1DMC"/>
    </source>
</evidence>
<evidence type="ECO:0007829" key="8">
    <source>
        <dbReference type="PDB" id="1DME"/>
    </source>
</evidence>
<evidence type="ECO:0007829" key="9">
    <source>
        <dbReference type="PDB" id="1DMF"/>
    </source>
</evidence>
<sequence>MPGPCCNDKCVCQEGGCKAGCQCTSCRCSPCQKCTSGCKCATKEECSKTCTKPCSCCPK</sequence>
<proteinExistence type="evidence at protein level"/>